<keyword id="KW-1185">Reference proteome</keyword>
<keyword id="KW-1277">Toxin-antitoxin system</keyword>
<evidence type="ECO:0000305" key="1">
    <source>
    </source>
</evidence>
<name>VPB37_MYCTU</name>
<organism>
    <name type="scientific">Mycobacterium tuberculosis (strain ATCC 25618 / H37Rv)</name>
    <dbReference type="NCBI Taxonomy" id="83332"/>
    <lineage>
        <taxon>Bacteria</taxon>
        <taxon>Bacillati</taxon>
        <taxon>Actinomycetota</taxon>
        <taxon>Actinomycetes</taxon>
        <taxon>Mycobacteriales</taxon>
        <taxon>Mycobacteriaceae</taxon>
        <taxon>Mycobacterium</taxon>
        <taxon>Mycobacterium tuberculosis complex</taxon>
    </lineage>
</organism>
<accession>P9WJ27</accession>
<accession>L0T8P1</accession>
<accession>O53502</accession>
<accession>Q7D7I6</accession>
<comment type="function">
    <text evidence="1">Probable antitoxin component of a type II toxin-antitoxin (TA) system. Its putative cognate toxin is VapC37.</text>
</comment>
<feature type="chain" id="PRO_0000408079" description="Putative antitoxin VapB37">
    <location>
        <begin position="1"/>
        <end position="84"/>
    </location>
</feature>
<protein>
    <recommendedName>
        <fullName>Putative antitoxin VapB37</fullName>
    </recommendedName>
</protein>
<reference key="1">
    <citation type="journal article" date="1998" name="Nature">
        <title>Deciphering the biology of Mycobacterium tuberculosis from the complete genome sequence.</title>
        <authorList>
            <person name="Cole S.T."/>
            <person name="Brosch R."/>
            <person name="Parkhill J."/>
            <person name="Garnier T."/>
            <person name="Churcher C.M."/>
            <person name="Harris D.E."/>
            <person name="Gordon S.V."/>
            <person name="Eiglmeier K."/>
            <person name="Gas S."/>
            <person name="Barry C.E. III"/>
            <person name="Tekaia F."/>
            <person name="Badcock K."/>
            <person name="Basham D."/>
            <person name="Brown D."/>
            <person name="Chillingworth T."/>
            <person name="Connor R."/>
            <person name="Davies R.M."/>
            <person name="Devlin K."/>
            <person name="Feltwell T."/>
            <person name="Gentles S."/>
            <person name="Hamlin N."/>
            <person name="Holroyd S."/>
            <person name="Hornsby T."/>
            <person name="Jagels K."/>
            <person name="Krogh A."/>
            <person name="McLean J."/>
            <person name="Moule S."/>
            <person name="Murphy L.D."/>
            <person name="Oliver S."/>
            <person name="Osborne J."/>
            <person name="Quail M.A."/>
            <person name="Rajandream M.A."/>
            <person name="Rogers J."/>
            <person name="Rutter S."/>
            <person name="Seeger K."/>
            <person name="Skelton S."/>
            <person name="Squares S."/>
            <person name="Squares R."/>
            <person name="Sulston J.E."/>
            <person name="Taylor K."/>
            <person name="Whitehead S."/>
            <person name="Barrell B.G."/>
        </authorList>
    </citation>
    <scope>NUCLEOTIDE SEQUENCE [LARGE SCALE GENOMIC DNA]</scope>
    <source>
        <strain>ATCC 25618 / H37Rv</strain>
    </source>
</reference>
<reference key="2">
    <citation type="journal article" date="2009" name="PLoS Genet.">
        <title>Comprehensive functional analysis of Mycobacterium tuberculosis toxin-antitoxin systems: implications for pathogenesis, stress responses, and evolution.</title>
        <authorList>
            <person name="Ramage H.R."/>
            <person name="Connolly L.E."/>
            <person name="Cox J.S."/>
        </authorList>
    </citation>
    <scope>POSSIBLE FUNCTION</scope>
    <source>
        <strain>ATCC 35801 / TMC 107 / Erdman</strain>
    </source>
</reference>
<dbReference type="EMBL" id="AL123456">
    <property type="protein sequence ID" value="CCP44879.1"/>
    <property type="molecule type" value="Genomic_DNA"/>
</dbReference>
<dbReference type="PIR" id="E70841">
    <property type="entry name" value="E70841"/>
</dbReference>
<dbReference type="RefSeq" id="NP_216620.1">
    <property type="nucleotide sequence ID" value="NC_000962.3"/>
</dbReference>
<dbReference type="RefSeq" id="WP_003410814.1">
    <property type="nucleotide sequence ID" value="NZ_NVQJ01000084.1"/>
</dbReference>
<dbReference type="SMR" id="P9WJ27"/>
<dbReference type="PaxDb" id="83332-Rv2104c"/>
<dbReference type="DNASU" id="888014"/>
<dbReference type="GeneID" id="888014"/>
<dbReference type="KEGG" id="mtu:Rv2104c"/>
<dbReference type="KEGG" id="mtv:RVBD_2104c"/>
<dbReference type="TubercuList" id="Rv2104c"/>
<dbReference type="eggNOG" id="ENOG5033GPM">
    <property type="taxonomic scope" value="Bacteria"/>
</dbReference>
<dbReference type="InParanoid" id="P9WJ27"/>
<dbReference type="OrthoDB" id="3579062at2"/>
<dbReference type="PhylomeDB" id="P9WJ27"/>
<dbReference type="Proteomes" id="UP000001584">
    <property type="component" value="Chromosome"/>
</dbReference>
<proteinExistence type="predicted"/>
<gene>
    <name type="primary">vapB37</name>
    <name type="ordered locus">Rv2104c</name>
</gene>
<sequence>MRTTVTLDDDVEQLVRRRMAERQVSFKKALNDAIRDGASGRPAPSHFSTRTADLGVPAVNLDRALQLAADLEDEELVRRQRRGS</sequence>